<proteinExistence type="evidence at protein level"/>
<evidence type="ECO:0000255" key="1"/>
<evidence type="ECO:0000269" key="2">
    <source>
    </source>
</evidence>
<evidence type="ECO:0000269" key="3">
    <source>
    </source>
</evidence>
<evidence type="ECO:0007829" key="4">
    <source>
        <dbReference type="PDB" id="8EAS"/>
    </source>
</evidence>
<sequence>MFEIKLNDRITEFLRKFKNSAKSNEGIDEDIDLFLKRHAIPMQSLLFYVKEYRKDSDLQCSIKELLKPLEFEFKPKAVRGLHYSEDFKKKLEFLKYQEQELEYQSMVKRSKSVFSLQEDDELTPSQINKQIKEQVTTVFNVLVSVISVVVAIWYWTGSSTNFPVHVRLLLCLFFGILVLVADVVVYNSYLKKLEEAKVKEKTKVEKKKVLSKITL</sequence>
<comment type="function">
    <text>Required for vacuolar ATPase assembly.</text>
</comment>
<comment type="subcellular location">
    <subcellularLocation>
        <location evidence="3">Endoplasmic reticulum membrane</location>
        <topology evidence="3">Multi-pass membrane protein</topology>
    </subcellularLocation>
</comment>
<comment type="miscellaneous">
    <text evidence="2">Present with 2030 molecules/cell in log phase SD medium.</text>
</comment>
<reference key="1">
    <citation type="journal article" date="1993" name="J. Biol. Chem.">
        <title>VMA12 is essential for assembly of the vacuolar H(+)-ATPase subunits onto the vacuolar membrane in Saccharomyces cerevisiae.</title>
        <authorList>
            <person name="Hirata R."/>
            <person name="Umemoto N."/>
            <person name="Ho M.N."/>
            <person name="Ohya Y."/>
            <person name="Stevens T.H."/>
            <person name="Anraku Y."/>
        </authorList>
    </citation>
    <scope>NUCLEOTIDE SEQUENCE [GENOMIC DNA]</scope>
</reference>
<reference key="2">
    <citation type="journal article" date="1993" name="Yeast">
        <title>The VPH2 gene encodes a 25 kDa protein required for activity of the yeast vacuolar H(+)-ATPase.</title>
        <authorList>
            <person name="Bachhawat A.K."/>
            <person name="Manolson M.F."/>
            <person name="Murdock D.G."/>
            <person name="Garman J.D."/>
            <person name="Jones E.W."/>
        </authorList>
    </citation>
    <scope>NUCLEOTIDE SEQUENCE [GENOMIC DNA]</scope>
</reference>
<reference key="3">
    <citation type="journal article" date="1994" name="Nature">
        <title>Complete DNA sequence of yeast chromosome XI.</title>
        <authorList>
            <person name="Dujon B."/>
            <person name="Alexandraki D."/>
            <person name="Andre B."/>
            <person name="Ansorge W."/>
            <person name="Baladron V."/>
            <person name="Ballesta J.P.G."/>
            <person name="Banrevi A."/>
            <person name="Bolle P.-A."/>
            <person name="Bolotin-Fukuhara M."/>
            <person name="Bossier P."/>
            <person name="Bou G."/>
            <person name="Boyer J."/>
            <person name="Buitrago M.J."/>
            <person name="Cheret G."/>
            <person name="Colleaux L."/>
            <person name="Daignan-Fornier B."/>
            <person name="del Rey F."/>
            <person name="Dion C."/>
            <person name="Domdey H."/>
            <person name="Duesterhoeft A."/>
            <person name="Duesterhus S."/>
            <person name="Entian K.-D."/>
            <person name="Erfle H."/>
            <person name="Esteban P.F."/>
            <person name="Feldmann H."/>
            <person name="Fernandes L."/>
            <person name="Fobo G.M."/>
            <person name="Fritz C."/>
            <person name="Fukuhara H."/>
            <person name="Gabel C."/>
            <person name="Gaillon L."/>
            <person name="Garcia-Cantalejo J.M."/>
            <person name="Garcia-Ramirez J.J."/>
            <person name="Gent M.E."/>
            <person name="Ghazvini M."/>
            <person name="Goffeau A."/>
            <person name="Gonzalez A."/>
            <person name="Grothues D."/>
            <person name="Guerreiro P."/>
            <person name="Hegemann J.H."/>
            <person name="Hewitt N."/>
            <person name="Hilger F."/>
            <person name="Hollenberg C.P."/>
            <person name="Horaitis O."/>
            <person name="Indge K.J."/>
            <person name="Jacquier A."/>
            <person name="James C.M."/>
            <person name="Jauniaux J.-C."/>
            <person name="Jimenez A."/>
            <person name="Keuchel H."/>
            <person name="Kirchrath L."/>
            <person name="Kleine K."/>
            <person name="Koetter P."/>
            <person name="Legrain P."/>
            <person name="Liebl S."/>
            <person name="Louis E.J."/>
            <person name="Maia e Silva A."/>
            <person name="Marck C."/>
            <person name="Monnier A.-L."/>
            <person name="Moestl D."/>
            <person name="Mueller S."/>
            <person name="Obermaier B."/>
            <person name="Oliver S.G."/>
            <person name="Pallier C."/>
            <person name="Pascolo S."/>
            <person name="Pfeiffer F."/>
            <person name="Philippsen P."/>
            <person name="Planta R.J."/>
            <person name="Pohl F.M."/>
            <person name="Pohl T.M."/>
            <person name="Poehlmann R."/>
            <person name="Portetelle D."/>
            <person name="Purnelle B."/>
            <person name="Puzos V."/>
            <person name="Ramezani Rad M."/>
            <person name="Rasmussen S.W."/>
            <person name="Remacha M.A."/>
            <person name="Revuelta J.L."/>
            <person name="Richard G.-F."/>
            <person name="Rieger M."/>
            <person name="Rodrigues-Pousada C."/>
            <person name="Rose M."/>
            <person name="Rupp T."/>
            <person name="Santos M.A."/>
            <person name="Schwager C."/>
            <person name="Sensen C."/>
            <person name="Skala J."/>
            <person name="Soares H."/>
            <person name="Sor F."/>
            <person name="Stegemann J."/>
            <person name="Tettelin H."/>
            <person name="Thierry A."/>
            <person name="Tzermia M."/>
            <person name="Urrestarazu L.A."/>
            <person name="van Dyck L."/>
            <person name="van Vliet-Reedijk J.C."/>
            <person name="Valens M."/>
            <person name="Vandenbol M."/>
            <person name="Vilela C."/>
            <person name="Vissers S."/>
            <person name="von Wettstein D."/>
            <person name="Voss H."/>
            <person name="Wiemann S."/>
            <person name="Xu G."/>
            <person name="Zimmermann J."/>
            <person name="Haasemann M."/>
            <person name="Becker I."/>
            <person name="Mewes H.-W."/>
        </authorList>
    </citation>
    <scope>NUCLEOTIDE SEQUENCE [LARGE SCALE GENOMIC DNA]</scope>
    <source>
        <strain>ATCC 204508 / S288c</strain>
    </source>
</reference>
<reference key="4">
    <citation type="journal article" date="2014" name="G3 (Bethesda)">
        <title>The reference genome sequence of Saccharomyces cerevisiae: Then and now.</title>
        <authorList>
            <person name="Engel S.R."/>
            <person name="Dietrich F.S."/>
            <person name="Fisk D.G."/>
            <person name="Binkley G."/>
            <person name="Balakrishnan R."/>
            <person name="Costanzo M.C."/>
            <person name="Dwight S.S."/>
            <person name="Hitz B.C."/>
            <person name="Karra K."/>
            <person name="Nash R.S."/>
            <person name="Weng S."/>
            <person name="Wong E.D."/>
            <person name="Lloyd P."/>
            <person name="Skrzypek M.S."/>
            <person name="Miyasato S.R."/>
            <person name="Simison M."/>
            <person name="Cherry J.M."/>
        </authorList>
    </citation>
    <scope>GENOME REANNOTATION</scope>
    <source>
        <strain>ATCC 204508 / S288c</strain>
    </source>
</reference>
<reference key="5">
    <citation type="journal article" date="1992" name="Yeast">
        <title>Sequence of a 10.7 kb segment of yeast chromosome XI identifies the APN1 and the BAF1 loci and reveals one tRNA gene and several new open reading frames including homologs to RAD2 and kinases.</title>
        <authorList>
            <person name="Jacquier A."/>
            <person name="Legrain P."/>
            <person name="Dujon B."/>
        </authorList>
    </citation>
    <scope>NUCLEOTIDE SEQUENCE [GENOMIC DNA] OF 1-73</scope>
</reference>
<reference key="6">
    <citation type="journal article" date="1992" name="Yeast">
        <title>Sequence of a segment of yeast chromosome XI identifies a new mitochondrial carrier, a new member of the G protein family, and a protein with the PAAKK motif of the H1 histones.</title>
        <authorList>
            <person name="Colleaux L."/>
            <person name="Richard G.-F."/>
            <person name="Thierry A."/>
            <person name="Dujon B."/>
        </authorList>
    </citation>
    <scope>NUCLEOTIDE SEQUENCE [GENOMIC DNA] OF 72-215</scope>
</reference>
<reference key="7">
    <citation type="journal article" date="1997" name="J. Biol. Chem.">
        <title>VMA12 encodes a yeast endoplasmic reticulum protein required for vacuolar H+-ATPase assembly.</title>
        <authorList>
            <person name="Jackson D.D."/>
            <person name="Stevens T.H."/>
        </authorList>
    </citation>
    <scope>SUBCELLULAR LOCATION</scope>
    <scope>TOPOLOGY</scope>
</reference>
<reference key="8">
    <citation type="journal article" date="2003" name="Nature">
        <title>Global analysis of protein expression in yeast.</title>
        <authorList>
            <person name="Ghaemmaghami S."/>
            <person name="Huh W.-K."/>
            <person name="Bower K."/>
            <person name="Howson R.W."/>
            <person name="Belle A."/>
            <person name="Dephoure N."/>
            <person name="O'Shea E.K."/>
            <person name="Weissman J.S."/>
        </authorList>
    </citation>
    <scope>LEVEL OF PROTEIN EXPRESSION [LARGE SCALE ANALYSIS]</scope>
</reference>
<reference key="9">
    <citation type="journal article" date="2006" name="Proc. Natl. Acad. Sci. U.S.A.">
        <title>A global topology map of the Saccharomyces cerevisiae membrane proteome.</title>
        <authorList>
            <person name="Kim H."/>
            <person name="Melen K."/>
            <person name="Oesterberg M."/>
            <person name="von Heijne G."/>
        </authorList>
    </citation>
    <scope>TOPOLOGY [LARGE SCALE ANALYSIS]</scope>
    <source>
        <strain>ATCC 208353 / W303-1A</strain>
    </source>
</reference>
<reference key="10">
    <citation type="journal article" date="2009" name="Science">
        <title>Global analysis of Cdk1 substrate phosphorylation sites provides insights into evolution.</title>
        <authorList>
            <person name="Holt L.J."/>
            <person name="Tuch B.B."/>
            <person name="Villen J."/>
            <person name="Johnson A.D."/>
            <person name="Gygi S.P."/>
            <person name="Morgan D.O."/>
        </authorList>
    </citation>
    <scope>IDENTIFICATION BY MASS SPECTROMETRY [LARGE SCALE ANALYSIS]</scope>
</reference>
<reference key="11">
    <citation type="journal article" date="2012" name="Proc. Natl. Acad. Sci. U.S.A.">
        <title>N-terminal acetylome analyses and functional insights of the N-terminal acetyltransferase NatB.</title>
        <authorList>
            <person name="Van Damme P."/>
            <person name="Lasa M."/>
            <person name="Polevoda B."/>
            <person name="Gazquez C."/>
            <person name="Elosegui-Artola A."/>
            <person name="Kim D.S."/>
            <person name="De Juan-Pardo E."/>
            <person name="Demeyer K."/>
            <person name="Hole K."/>
            <person name="Larrea E."/>
            <person name="Timmerman E."/>
            <person name="Prieto J."/>
            <person name="Arnesen T."/>
            <person name="Sherman F."/>
            <person name="Gevaert K."/>
            <person name="Aldabe R."/>
        </authorList>
    </citation>
    <scope>IDENTIFICATION BY MASS SPECTROMETRY [LARGE SCALE ANALYSIS]</scope>
</reference>
<feature type="chain" id="PRO_0000065874" description="Vacuolar ATPase assembly integral membrane protein VPH2">
    <location>
        <begin position="1"/>
        <end position="215"/>
    </location>
</feature>
<feature type="topological domain" description="Cytoplasmic" evidence="1">
    <location>
        <begin position="1"/>
        <end position="134"/>
    </location>
</feature>
<feature type="transmembrane region" description="Helical" evidence="1">
    <location>
        <begin position="135"/>
        <end position="155"/>
    </location>
</feature>
<feature type="topological domain" description="Lumenal" evidence="1">
    <location>
        <begin position="156"/>
        <end position="167"/>
    </location>
</feature>
<feature type="transmembrane region" description="Helical" evidence="1">
    <location>
        <begin position="168"/>
        <end position="186"/>
    </location>
</feature>
<feature type="topological domain" description="Cytoplasmic" evidence="1">
    <location>
        <begin position="187"/>
        <end position="215"/>
    </location>
</feature>
<feature type="strand" evidence="4">
    <location>
        <begin position="2"/>
        <end position="5"/>
    </location>
</feature>
<feature type="helix" evidence="4">
    <location>
        <begin position="8"/>
        <end position="17"/>
    </location>
</feature>
<feature type="helix" evidence="4">
    <location>
        <begin position="25"/>
        <end position="37"/>
    </location>
</feature>
<feature type="helix" evidence="4">
    <location>
        <begin position="42"/>
        <end position="52"/>
    </location>
</feature>
<feature type="strand" evidence="4">
    <location>
        <begin position="70"/>
        <end position="73"/>
    </location>
</feature>
<feature type="turn" evidence="4">
    <location>
        <begin position="79"/>
        <end position="82"/>
    </location>
</feature>
<feature type="helix" evidence="4">
    <location>
        <begin position="85"/>
        <end position="106"/>
    </location>
</feature>
<name>VPH2_YEAST</name>
<keyword id="KW-0002">3D-structure</keyword>
<keyword id="KW-0256">Endoplasmic reticulum</keyword>
<keyword id="KW-0472">Membrane</keyword>
<keyword id="KW-1185">Reference proteome</keyword>
<keyword id="KW-0812">Transmembrane</keyword>
<keyword id="KW-1133">Transmembrane helix</keyword>
<dbReference type="EMBL" id="D11472">
    <property type="protein sequence ID" value="BAA02029.1"/>
    <property type="molecule type" value="Genomic_DNA"/>
</dbReference>
<dbReference type="EMBL" id="M93350">
    <property type="protein sequence ID" value="AAA35212.1"/>
    <property type="molecule type" value="Genomic_DNA"/>
</dbReference>
<dbReference type="EMBL" id="Z28118">
    <property type="protein sequence ID" value="CAA81960.1"/>
    <property type="molecule type" value="Genomic_DNA"/>
</dbReference>
<dbReference type="EMBL" id="S93804">
    <property type="protein sequence ID" value="AAB22004.1"/>
    <property type="molecule type" value="Genomic_DNA"/>
</dbReference>
<dbReference type="EMBL" id="S44213">
    <property type="protein sequence ID" value="AAB23070.2"/>
    <property type="molecule type" value="Genomic_DNA"/>
</dbReference>
<dbReference type="EMBL" id="BK006944">
    <property type="protein sequence ID" value="DAA09041.1"/>
    <property type="molecule type" value="Genomic_DNA"/>
</dbReference>
<dbReference type="PIR" id="S25358">
    <property type="entry name" value="S25358"/>
</dbReference>
<dbReference type="RefSeq" id="NP_012803.1">
    <property type="nucleotide sequence ID" value="NM_001179685.1"/>
</dbReference>
<dbReference type="PDB" id="8EAS">
    <property type="method" value="EM"/>
    <property type="resolution" value="2.60 A"/>
    <property type="chains" value="B=1-108"/>
</dbReference>
<dbReference type="PDB" id="8EAT">
    <property type="method" value="EM"/>
    <property type="resolution" value="3.10 A"/>
    <property type="chains" value="B=1-215"/>
</dbReference>
<dbReference type="PDBsum" id="8EAS"/>
<dbReference type="PDBsum" id="8EAT"/>
<dbReference type="EMDB" id="EMD-27985"/>
<dbReference type="SMR" id="P32341"/>
<dbReference type="BioGRID" id="34016">
    <property type="interactions" value="238"/>
</dbReference>
<dbReference type="DIP" id="DIP-5907N"/>
<dbReference type="FunCoup" id="P32341">
    <property type="interactions" value="97"/>
</dbReference>
<dbReference type="IntAct" id="P32341">
    <property type="interactions" value="5"/>
</dbReference>
<dbReference type="STRING" id="4932.YKL119C"/>
<dbReference type="TCDB" id="9.B.206.2.1">
    <property type="family name" value="the tmem199 (tmem199) family"/>
</dbReference>
<dbReference type="iPTMnet" id="P32341"/>
<dbReference type="PaxDb" id="4932-YKL119C"/>
<dbReference type="PeptideAtlas" id="P32341"/>
<dbReference type="DNASU" id="853741"/>
<dbReference type="EnsemblFungi" id="YKL119C_mRNA">
    <property type="protein sequence ID" value="YKL119C"/>
    <property type="gene ID" value="YKL119C"/>
</dbReference>
<dbReference type="GeneID" id="853741"/>
<dbReference type="KEGG" id="sce:YKL119C"/>
<dbReference type="AGR" id="SGD:S000001602"/>
<dbReference type="SGD" id="S000001602">
    <property type="gene designation" value="VPH2"/>
</dbReference>
<dbReference type="VEuPathDB" id="FungiDB:YKL119C"/>
<dbReference type="eggNOG" id="ENOG502RZXR">
    <property type="taxonomic scope" value="Eukaryota"/>
</dbReference>
<dbReference type="HOGENOM" id="CLU_091774_0_0_1"/>
<dbReference type="InParanoid" id="P32341"/>
<dbReference type="OMA" id="WYWTGSS"/>
<dbReference type="OrthoDB" id="19981at2759"/>
<dbReference type="BioCyc" id="YEAST:G3O-31902-MONOMER"/>
<dbReference type="BioGRID-ORCS" id="853741">
    <property type="hits" value="1 hit in 10 CRISPR screens"/>
</dbReference>
<dbReference type="PRO" id="PR:P32341"/>
<dbReference type="Proteomes" id="UP000002311">
    <property type="component" value="Chromosome XI"/>
</dbReference>
<dbReference type="RNAct" id="P32341">
    <property type="molecule type" value="protein"/>
</dbReference>
<dbReference type="GO" id="GO:0012505">
    <property type="term" value="C:endomembrane system"/>
    <property type="evidence" value="ECO:0000318"/>
    <property type="project" value="GO_Central"/>
</dbReference>
<dbReference type="GO" id="GO:0005783">
    <property type="term" value="C:endoplasmic reticulum"/>
    <property type="evidence" value="ECO:0007005"/>
    <property type="project" value="SGD"/>
</dbReference>
<dbReference type="GO" id="GO:0005789">
    <property type="term" value="C:endoplasmic reticulum membrane"/>
    <property type="evidence" value="ECO:0000314"/>
    <property type="project" value="SGD"/>
</dbReference>
<dbReference type="GO" id="GO:1990871">
    <property type="term" value="C:Vma12-Vma22 assembly complex"/>
    <property type="evidence" value="ECO:0000353"/>
    <property type="project" value="SGD"/>
</dbReference>
<dbReference type="GO" id="GO:0007035">
    <property type="term" value="P:vacuolar acidification"/>
    <property type="evidence" value="ECO:0000315"/>
    <property type="project" value="SGD"/>
</dbReference>
<dbReference type="GO" id="GO:0070072">
    <property type="term" value="P:vacuolar proton-transporting V-type ATPase complex assembly"/>
    <property type="evidence" value="ECO:0000315"/>
    <property type="project" value="SGD"/>
</dbReference>
<dbReference type="InterPro" id="IPR021013">
    <property type="entry name" value="ATPase_Vma12"/>
</dbReference>
<dbReference type="PANTHER" id="PTHR31394">
    <property type="entry name" value="TRANSMEMBRANE PROTEIN 199"/>
    <property type="match status" value="1"/>
</dbReference>
<dbReference type="PANTHER" id="PTHR31394:SF1">
    <property type="entry name" value="TRANSMEMBRANE PROTEIN 199"/>
    <property type="match status" value="1"/>
</dbReference>
<dbReference type="Pfam" id="PF11712">
    <property type="entry name" value="Vma12"/>
    <property type="match status" value="1"/>
</dbReference>
<protein>
    <recommendedName>
        <fullName>Vacuolar ATPase assembly integral membrane protein VPH2</fullName>
    </recommendedName>
    <alternativeName>
        <fullName>Protein VMA12</fullName>
    </alternativeName>
</protein>
<gene>
    <name type="primary">VPH2</name>
    <name type="synonym">CLS10</name>
    <name type="synonym">VMA12</name>
    <name type="ordered locus">YKL119C</name>
    <name type="ORF">YKL520</name>
</gene>
<accession>P32341</accession>
<accession>D6VXH1</accession>
<organism>
    <name type="scientific">Saccharomyces cerevisiae (strain ATCC 204508 / S288c)</name>
    <name type="common">Baker's yeast</name>
    <dbReference type="NCBI Taxonomy" id="559292"/>
    <lineage>
        <taxon>Eukaryota</taxon>
        <taxon>Fungi</taxon>
        <taxon>Dikarya</taxon>
        <taxon>Ascomycota</taxon>
        <taxon>Saccharomycotina</taxon>
        <taxon>Saccharomycetes</taxon>
        <taxon>Saccharomycetales</taxon>
        <taxon>Saccharomycetaceae</taxon>
        <taxon>Saccharomyces</taxon>
    </lineage>
</organism>